<dbReference type="EMBL" id="AF215044">
    <property type="protein sequence ID" value="AAG60472.1"/>
    <property type="molecule type" value="mRNA"/>
</dbReference>
<dbReference type="SMR" id="Q9BP94"/>
<dbReference type="ConoServer" id="731">
    <property type="toxin name" value="Vn6.17 precursor"/>
</dbReference>
<dbReference type="GO" id="GO:0005576">
    <property type="term" value="C:extracellular region"/>
    <property type="evidence" value="ECO:0007669"/>
    <property type="project" value="UniProtKB-SubCell"/>
</dbReference>
<dbReference type="GO" id="GO:0008200">
    <property type="term" value="F:ion channel inhibitor activity"/>
    <property type="evidence" value="ECO:0007669"/>
    <property type="project" value="InterPro"/>
</dbReference>
<dbReference type="GO" id="GO:0090729">
    <property type="term" value="F:toxin activity"/>
    <property type="evidence" value="ECO:0007669"/>
    <property type="project" value="UniProtKB-KW"/>
</dbReference>
<dbReference type="InterPro" id="IPR004214">
    <property type="entry name" value="Conotoxin"/>
</dbReference>
<dbReference type="Pfam" id="PF02950">
    <property type="entry name" value="Conotoxin"/>
    <property type="match status" value="1"/>
</dbReference>
<organism>
    <name type="scientific">Conus ventricosus</name>
    <name type="common">Mediterranean cone</name>
    <dbReference type="NCBI Taxonomy" id="117992"/>
    <lineage>
        <taxon>Eukaryota</taxon>
        <taxon>Metazoa</taxon>
        <taxon>Spiralia</taxon>
        <taxon>Lophotrochozoa</taxon>
        <taxon>Mollusca</taxon>
        <taxon>Gastropoda</taxon>
        <taxon>Caenogastropoda</taxon>
        <taxon>Neogastropoda</taxon>
        <taxon>Conoidea</taxon>
        <taxon>Conidae</taxon>
        <taxon>Conus</taxon>
        <taxon>Lautoconus</taxon>
    </lineage>
</organism>
<sequence length="75" mass="8175">MMKLTCVLIIAVLFLTACQLTTAETRDEYRAVRSSDEVRNSRSTRDCSGSGYGCKNTPCCDGLTCRGPHQGPICL</sequence>
<feature type="signal peptide" evidence="2">
    <location>
        <begin position="1"/>
        <end position="23"/>
    </location>
</feature>
<feature type="propeptide" id="PRO_0000404754" evidence="1">
    <location>
        <begin position="24"/>
        <end position="45"/>
    </location>
</feature>
<feature type="peptide" id="PRO_0000404755" description="Conotoxin VnMKLT2-012">
    <location>
        <begin position="46"/>
        <end position="75"/>
    </location>
</feature>
<feature type="region of interest" description="Disordered" evidence="3">
    <location>
        <begin position="31"/>
        <end position="50"/>
    </location>
</feature>
<feature type="compositionally biased region" description="Basic and acidic residues" evidence="3">
    <location>
        <begin position="31"/>
        <end position="45"/>
    </location>
</feature>
<feature type="disulfide bond" evidence="1">
    <location>
        <begin position="47"/>
        <end position="60"/>
    </location>
</feature>
<feature type="disulfide bond" evidence="1">
    <location>
        <begin position="54"/>
        <end position="65"/>
    </location>
</feature>
<feature type="disulfide bond" evidence="1">
    <location>
        <begin position="59"/>
        <end position="74"/>
    </location>
</feature>
<proteinExistence type="evidence at transcript level"/>
<accession>Q9BP94</accession>
<comment type="subcellular location">
    <subcellularLocation>
        <location evidence="1">Secreted</location>
    </subcellularLocation>
</comment>
<comment type="tissue specificity">
    <text>Expressed by the venom duct.</text>
</comment>
<comment type="domain">
    <text evidence="1">The presence of a 'disulfide through disulfide knot' structurally defines this protein as a knottin.</text>
</comment>
<comment type="domain">
    <text>The cysteine framework is VI/VII (C-C-CC-C-C).</text>
</comment>
<comment type="similarity">
    <text evidence="4">Belongs to the conotoxin O1 superfamily.</text>
</comment>
<evidence type="ECO:0000250" key="1"/>
<evidence type="ECO:0000255" key="2"/>
<evidence type="ECO:0000256" key="3">
    <source>
        <dbReference type="SAM" id="MobiDB-lite"/>
    </source>
</evidence>
<evidence type="ECO:0000305" key="4"/>
<reference key="1">
    <citation type="journal article" date="2001" name="Mol. Biol. Evol.">
        <title>Mechanisms for evolving hypervariability: the case of conopeptides.</title>
        <authorList>
            <person name="Conticello S.G."/>
            <person name="Gilad Y."/>
            <person name="Avidan N."/>
            <person name="Ben-Asher E."/>
            <person name="Levy Z."/>
            <person name="Fainzilber M."/>
        </authorList>
    </citation>
    <scope>NUCLEOTIDE SEQUENCE [MRNA]</scope>
    <source>
        <tissue>Venom duct</tissue>
    </source>
</reference>
<name>O1617_CONVE</name>
<keyword id="KW-1015">Disulfide bond</keyword>
<keyword id="KW-0960">Knottin</keyword>
<keyword id="KW-0528">Neurotoxin</keyword>
<keyword id="KW-0964">Secreted</keyword>
<keyword id="KW-0732">Signal</keyword>
<keyword id="KW-0800">Toxin</keyword>
<protein>
    <recommendedName>
        <fullName>Conotoxin VnMKLT2-012</fullName>
    </recommendedName>
</protein>